<evidence type="ECO:0000256" key="1">
    <source>
        <dbReference type="SAM" id="MobiDB-lite"/>
    </source>
</evidence>
<evidence type="ECO:0000269" key="2">
    <source>
    </source>
</evidence>
<evidence type="ECO:0000269" key="3">
    <source>
    </source>
</evidence>
<evidence type="ECO:0000269" key="4">
    <source>
    </source>
</evidence>
<evidence type="ECO:0000269" key="5">
    <source>
    </source>
</evidence>
<evidence type="ECO:0000269" key="6">
    <source>
    </source>
</evidence>
<evidence type="ECO:0000269" key="7">
    <source>
    </source>
</evidence>
<evidence type="ECO:0000269" key="8">
    <source>
    </source>
</evidence>
<evidence type="ECO:0000269" key="9">
    <source>
    </source>
</evidence>
<evidence type="ECO:0000269" key="10">
    <source>
    </source>
</evidence>
<evidence type="ECO:0000305" key="11"/>
<evidence type="ECO:0007744" key="12">
    <source>
    </source>
</evidence>
<evidence type="ECO:0007829" key="13">
    <source>
        <dbReference type="PDB" id="7VVY"/>
    </source>
</evidence>
<evidence type="ECO:0007829" key="14">
    <source>
        <dbReference type="PDB" id="8ESC"/>
    </source>
</evidence>
<sequence>MSSSDIFDVLNIKQKSRSPTNGQVSVPSSSAANRPKPQVTGMQRELFNLLGENQPPVVIKSGNNFKEKMLSTSKPSPWSFVEFKANNSVTLRHWVKGSKELIGDTPKESPYSKFNQHLSIPSFTKEEYEAFMNENEGTQKSVESEKNHNENFTNEKKDESKNSWSFEEIEYLFNLCKKYDLRWFLIFDRYSYNNSRTLEDLKEKFYYTCRNYFKASDPSNPLLSSLNFSAEKEIERKKYLQRLLSRSAAEIAEEEALVVESKKFEMAAKRTLAERESLLRLLDSPHSDQTITQYLTSQGMSQLYNALLADKTRKRKHDLNIPENPWMKQQQQFAQHRQLQQLNVKKSEVKENLSPKKTKRQRQEMQTALKRKSESAYAEQLLKDFNSDERKALGVITHGEKLSPGVYLRSTKLSTFKPALQNKILAILQELSLPSRPVMPSFDVMERQEELLKKINTLIDLKKHVDKYEAGMSITK</sequence>
<organism>
    <name type="scientific">Saccharomyces cerevisiae (strain ATCC 204508 / S288c)</name>
    <name type="common">Baker's yeast</name>
    <dbReference type="NCBI Taxonomy" id="559292"/>
    <lineage>
        <taxon>Eukaryota</taxon>
        <taxon>Fungi</taxon>
        <taxon>Dikarya</taxon>
        <taxon>Ascomycota</taxon>
        <taxon>Saccharomycotina</taxon>
        <taxon>Saccharomycetes</taxon>
        <taxon>Saccharomycetales</taxon>
        <taxon>Saccharomycetaceae</taxon>
        <taxon>Saccharomyces</taxon>
    </lineage>
</organism>
<proteinExistence type="evidence at protein level"/>
<comment type="function">
    <text evidence="4 6 7">Component of the SWR1 complex which mediates the ATP-dependent exchange of histone H2A for the H2A variant HZT1 leading to transcriptional regulation of selected genes by chromatin remodeling. Component of the NuA4 histone acetyltransferase complex which is involved in transcriptional activation of selected genes principally by acetylation of nucleosomal histone H4 and H2A. The NuA4 complex is also involved in DNA repair.</text>
</comment>
<comment type="subunit">
    <text evidence="4 5 6 7 8 9 10">Component of the SWR1 chromatin-remodeling complex composed of at least ACT1, ARP4, RVB1, RVB2, ARP6, YAF9, VPS71, VPS72, SWC3, SWC4, SWC5, SWC7 and SWR1, and perhaps BDF1. Component of the NuA4 histone acetyltransferase complex composed of at least ACT1, ARP4, YAF9, VID21, SWC4, EAF3, EAF5, EAF6, EAF7, EPL1, ESA1, TRA1 and YNG2. Interacts with YAF9. Interacts with EAF1.</text>
</comment>
<comment type="interaction">
    <interactant intactId="EBI-23061">
        <id>P53201</id>
    </interactant>
    <interactant intactId="EBI-3493">
        <id>P35817</id>
        <label>BDF1</label>
    </interactant>
    <organismsDiffer>false</organismsDiffer>
    <experiments>2</experiments>
</comment>
<comment type="interaction">
    <interactant intactId="EBI-23061">
        <id>P53201</id>
    </interactant>
    <interactant intactId="EBI-35867">
        <id>Q06337</id>
        <label>EAF1</label>
    </interactant>
    <organismsDiffer>false</organismsDiffer>
    <experiments>5</experiments>
</comment>
<comment type="interaction">
    <interactant intactId="EBI-23061">
        <id>P53201</id>
    </interactant>
    <interactant intactId="EBI-31814">
        <id>Q12464</id>
        <label>RVB2</label>
    </interactant>
    <organismsDiffer>false</organismsDiffer>
    <experiments>5</experiments>
</comment>
<comment type="interaction">
    <interactant intactId="EBI-23061">
        <id>P53201</id>
    </interactant>
    <interactant intactId="EBI-22102">
        <id>Q05471</id>
        <label>SWR1</label>
    </interactant>
    <organismsDiffer>false</organismsDiffer>
    <experiments>8</experiments>
</comment>
<comment type="subcellular location">
    <subcellularLocation>
        <location evidence="2">Nucleus</location>
    </subcellularLocation>
</comment>
<comment type="miscellaneous">
    <text evidence="3">Present with 2230 molecules/cell in log phase SD medium.</text>
</comment>
<comment type="similarity">
    <text evidence="11">Belongs to the SWC4 family.</text>
</comment>
<protein>
    <recommendedName>
        <fullName>SWR1-complex protein 4</fullName>
    </recommendedName>
    <alternativeName>
        <fullName>ESA1-associated factor 2</fullName>
    </alternativeName>
</protein>
<keyword id="KW-0002">3D-structure</keyword>
<keyword id="KW-0007">Acetylation</keyword>
<keyword id="KW-0010">Activator</keyword>
<keyword id="KW-0156">Chromatin regulator</keyword>
<keyword id="KW-0227">DNA damage</keyword>
<keyword id="KW-0234">DNA repair</keyword>
<keyword id="KW-0539">Nucleus</keyword>
<keyword id="KW-1185">Reference proteome</keyword>
<keyword id="KW-0804">Transcription</keyword>
<keyword id="KW-0805">Transcription regulation</keyword>
<reference key="1">
    <citation type="journal article" date="1997" name="Nature">
        <title>The nucleotide sequence of Saccharomyces cerevisiae chromosome VII.</title>
        <authorList>
            <person name="Tettelin H."/>
            <person name="Agostoni-Carbone M.L."/>
            <person name="Albermann K."/>
            <person name="Albers M."/>
            <person name="Arroyo J."/>
            <person name="Backes U."/>
            <person name="Barreiros T."/>
            <person name="Bertani I."/>
            <person name="Bjourson A.J."/>
            <person name="Brueckner M."/>
            <person name="Bruschi C.V."/>
            <person name="Carignani G."/>
            <person name="Castagnoli L."/>
            <person name="Cerdan E."/>
            <person name="Clemente M.L."/>
            <person name="Coblenz A."/>
            <person name="Coglievina M."/>
            <person name="Coissac E."/>
            <person name="Defoor E."/>
            <person name="Del Bino S."/>
            <person name="Delius H."/>
            <person name="Delneri D."/>
            <person name="de Wergifosse P."/>
            <person name="Dujon B."/>
            <person name="Durand P."/>
            <person name="Entian K.-D."/>
            <person name="Eraso P."/>
            <person name="Escribano V."/>
            <person name="Fabiani L."/>
            <person name="Fartmann B."/>
            <person name="Feroli F."/>
            <person name="Feuermann M."/>
            <person name="Frontali L."/>
            <person name="Garcia-Gonzalez M."/>
            <person name="Garcia-Saez M.I."/>
            <person name="Goffeau A."/>
            <person name="Guerreiro P."/>
            <person name="Hani J."/>
            <person name="Hansen M."/>
            <person name="Hebling U."/>
            <person name="Hernandez K."/>
            <person name="Heumann K."/>
            <person name="Hilger F."/>
            <person name="Hofmann B."/>
            <person name="Indge K.J."/>
            <person name="James C.M."/>
            <person name="Klima R."/>
            <person name="Koetter P."/>
            <person name="Kramer B."/>
            <person name="Kramer W."/>
            <person name="Lauquin G."/>
            <person name="Leuther H."/>
            <person name="Louis E.J."/>
            <person name="Maillier E."/>
            <person name="Marconi A."/>
            <person name="Martegani E."/>
            <person name="Mazon M.J."/>
            <person name="Mazzoni C."/>
            <person name="McReynolds A.D.K."/>
            <person name="Melchioretto P."/>
            <person name="Mewes H.-W."/>
            <person name="Minenkova O."/>
            <person name="Mueller-Auer S."/>
            <person name="Nawrocki A."/>
            <person name="Netter P."/>
            <person name="Neu R."/>
            <person name="Nombela C."/>
            <person name="Oliver S.G."/>
            <person name="Panzeri L."/>
            <person name="Paoluzi S."/>
            <person name="Plevani P."/>
            <person name="Portetelle D."/>
            <person name="Portillo F."/>
            <person name="Potier S."/>
            <person name="Purnelle B."/>
            <person name="Rieger M."/>
            <person name="Riles L."/>
            <person name="Rinaldi T."/>
            <person name="Robben J."/>
            <person name="Rodrigues-Pousada C."/>
            <person name="Rodriguez-Belmonte E."/>
            <person name="Rodriguez-Torres A.M."/>
            <person name="Rose M."/>
            <person name="Ruzzi M."/>
            <person name="Saliola M."/>
            <person name="Sanchez-Perez M."/>
            <person name="Schaefer B."/>
            <person name="Schaefer M."/>
            <person name="Scharfe M."/>
            <person name="Schmidheini T."/>
            <person name="Schreer A."/>
            <person name="Skala J."/>
            <person name="Souciet J.-L."/>
            <person name="Steensma H.Y."/>
            <person name="Talla E."/>
            <person name="Thierry A."/>
            <person name="Vandenbol M."/>
            <person name="van der Aart Q.J.M."/>
            <person name="Van Dyck L."/>
            <person name="Vanoni M."/>
            <person name="Verhasselt P."/>
            <person name="Voet M."/>
            <person name="Volckaert G."/>
            <person name="Wambutt R."/>
            <person name="Watson M.D."/>
            <person name="Weber N."/>
            <person name="Wedler E."/>
            <person name="Wedler H."/>
            <person name="Wipfli P."/>
            <person name="Wolf K."/>
            <person name="Wright L.F."/>
            <person name="Zaccaria P."/>
            <person name="Zimmermann M."/>
            <person name="Zollner A."/>
            <person name="Kleine K."/>
        </authorList>
    </citation>
    <scope>NUCLEOTIDE SEQUENCE [LARGE SCALE GENOMIC DNA]</scope>
    <source>
        <strain>ATCC 204508 / S288c</strain>
    </source>
</reference>
<reference key="2">
    <citation type="journal article" date="2014" name="G3 (Bethesda)">
        <title>The reference genome sequence of Saccharomyces cerevisiae: Then and now.</title>
        <authorList>
            <person name="Engel S.R."/>
            <person name="Dietrich F.S."/>
            <person name="Fisk D.G."/>
            <person name="Binkley G."/>
            <person name="Balakrishnan R."/>
            <person name="Costanzo M.C."/>
            <person name="Dwight S.S."/>
            <person name="Hitz B.C."/>
            <person name="Karra K."/>
            <person name="Nash R.S."/>
            <person name="Weng S."/>
            <person name="Wong E.D."/>
            <person name="Lloyd P."/>
            <person name="Skrzypek M.S."/>
            <person name="Miyasato S.R."/>
            <person name="Simison M."/>
            <person name="Cherry J.M."/>
        </authorList>
    </citation>
    <scope>GENOME REANNOTATION</scope>
    <source>
        <strain>ATCC 204508 / S288c</strain>
    </source>
</reference>
<reference key="3">
    <citation type="journal article" date="2007" name="Genome Res.">
        <title>Approaching a complete repository of sequence-verified protein-encoding clones for Saccharomyces cerevisiae.</title>
        <authorList>
            <person name="Hu Y."/>
            <person name="Rolfs A."/>
            <person name="Bhullar B."/>
            <person name="Murthy T.V.S."/>
            <person name="Zhu C."/>
            <person name="Berger M.F."/>
            <person name="Camargo A.A."/>
            <person name="Kelley F."/>
            <person name="McCarron S."/>
            <person name="Jepson D."/>
            <person name="Richardson A."/>
            <person name="Raphael J."/>
            <person name="Moreira D."/>
            <person name="Taycher E."/>
            <person name="Zuo D."/>
            <person name="Mohr S."/>
            <person name="Kane M.F."/>
            <person name="Williamson J."/>
            <person name="Simpson A.J.G."/>
            <person name="Bulyk M.L."/>
            <person name="Harlow E."/>
            <person name="Marsischky G."/>
            <person name="Kolodner R.D."/>
            <person name="LaBaer J."/>
        </authorList>
    </citation>
    <scope>NUCLEOTIDE SEQUENCE [GENOMIC DNA]</scope>
    <source>
        <strain>ATCC 204508 / S288c</strain>
    </source>
</reference>
<reference key="4">
    <citation type="journal article" date="2003" name="Mol. Cell">
        <title>Assigning function to yeast proteins by integration of technologies.</title>
        <authorList>
            <person name="Hazbun T.R."/>
            <person name="Malmstroem L."/>
            <person name="Anderson S."/>
            <person name="Graczyk B.J."/>
            <person name="Fox B."/>
            <person name="Riffle M."/>
            <person name="Sundin B.A."/>
            <person name="Aranda J.D."/>
            <person name="McDonald W.H."/>
            <person name="Chiu C.-H."/>
            <person name="Snydsman B.E."/>
            <person name="Bradley P."/>
            <person name="Muller E.G.D."/>
            <person name="Fields S."/>
            <person name="Baker D."/>
            <person name="Yates J.R. III"/>
            <person name="Davis T.N."/>
        </authorList>
    </citation>
    <scope>IDENTIFICATION BY MASS SPECTROMETRY</scope>
    <scope>INTERACTION WITH EAF1</scope>
</reference>
<reference key="5">
    <citation type="journal article" date="2003" name="Mol. Cell">
        <title>A Snf2 family ATPase complex required for recruitment of the histone H2A variant Htz1.</title>
        <authorList>
            <person name="Krogan N.J."/>
            <person name="Keogh M.-C."/>
            <person name="Datta N."/>
            <person name="Sawa C."/>
            <person name="Ryan O.W."/>
            <person name="Ding H."/>
            <person name="Haw R.A."/>
            <person name="Pootoolal J."/>
            <person name="Tong A."/>
            <person name="Canadien V."/>
            <person name="Richards D.P."/>
            <person name="Wu X."/>
            <person name="Emili A."/>
            <person name="Hughes T.R."/>
            <person name="Buratowski S."/>
            <person name="Greenblatt J.F."/>
        </authorList>
    </citation>
    <scope>IDENTIFICATION IN THE SWR1 COMPLEX</scope>
    <scope>FUNCTION OF THE SWR1 COMPLEX</scope>
    <scope>IDENTIFICATION BY MASS SPECTROMETRY</scope>
</reference>
<reference key="6">
    <citation type="journal article" date="2003" name="Nature">
        <title>Global analysis of protein localization in budding yeast.</title>
        <authorList>
            <person name="Huh W.-K."/>
            <person name="Falvo J.V."/>
            <person name="Gerke L.C."/>
            <person name="Carroll A.S."/>
            <person name="Howson R.W."/>
            <person name="Weissman J.S."/>
            <person name="O'Shea E.K."/>
        </authorList>
    </citation>
    <scope>SUBCELLULAR LOCATION [LARGE SCALE ANALYSIS]</scope>
</reference>
<reference key="7">
    <citation type="journal article" date="2003" name="Nature">
        <title>Global analysis of protein expression in yeast.</title>
        <authorList>
            <person name="Ghaemmaghami S."/>
            <person name="Huh W.-K."/>
            <person name="Bower K."/>
            <person name="Howson R.W."/>
            <person name="Belle A."/>
            <person name="Dephoure N."/>
            <person name="O'Shea E.K."/>
            <person name="Weissman J.S."/>
        </authorList>
    </citation>
    <scope>LEVEL OF PROTEIN EXPRESSION [LARGE SCALE ANALYSIS]</scope>
</reference>
<reference key="8">
    <citation type="journal article" date="2004" name="Eukaryot. Cell">
        <title>Direct physical and functional interaction of the NuA4 complex components Yaf9p and Swc4p.</title>
        <authorList>
            <person name="Bittner C.B."/>
            <person name="Zeisig D.T."/>
            <person name="Zeisig B.B."/>
            <person name="Slany R.K."/>
        </authorList>
    </citation>
    <scope>INTERACTION WITH YAF9</scope>
</reference>
<reference key="9">
    <citation type="journal article" date="2004" name="Mol. Cell. Biol.">
        <title>The Yaf9 component of the SWR1 and NuA4 complexes is required for proper gene expression, histone H4 acetylation, and Htz1 replacement near telomeres.</title>
        <authorList>
            <person name="Zhang H."/>
            <person name="Richardson D.O."/>
            <person name="Roberts D.N."/>
            <person name="Utley R.T."/>
            <person name="Erdjument-Bromage H."/>
            <person name="Tempst P."/>
            <person name="Cote J."/>
            <person name="Cairns B.R."/>
        </authorList>
    </citation>
    <scope>IDENTIFICATION IN THE NUA4 COMPLEX</scope>
    <scope>IDENTIFICATION BY MASS SPECTROMETRY</scope>
</reference>
<reference key="10">
    <citation type="journal article" date="2004" name="Proc. Natl. Acad. Sci. U.S.A.">
        <title>Regulation of chromosome stability by the histone H2A variant Htz1, the Swr1 chromatin remodeling complex, and the histone acetyltransferase NuA4.</title>
        <authorList>
            <person name="Krogan N.J."/>
            <person name="Baetz K."/>
            <person name="Keogh M.-C."/>
            <person name="Datta N."/>
            <person name="Sawa C."/>
            <person name="Kwok T.C.Y."/>
            <person name="Thompson N.J."/>
            <person name="Davey M.G."/>
            <person name="Pootoolal J."/>
            <person name="Hughes T.R."/>
            <person name="Emili A."/>
            <person name="Buratowski S."/>
            <person name="Hieter P."/>
            <person name="Greenblatt J.F."/>
        </authorList>
    </citation>
    <scope>IDENTIFICATION IN THE NUA4 COMPLEX</scope>
    <scope>IDENTIFICATION BY MASS SPECTROMETRY</scope>
</reference>
<reference key="11">
    <citation type="journal article" date="2004" name="PLoS Biol.">
        <title>A protein complex containing the conserved Swi2/Snf2-related ATPase Swr1p deposits histone variant H2A.Z into euchromatin.</title>
        <authorList>
            <person name="Kobor M.S."/>
            <person name="Venkatasubrahmanyam S."/>
            <person name="Meneghini M.D."/>
            <person name="Gin J.W."/>
            <person name="Jennings J.L."/>
            <person name="Link A.J."/>
            <person name="Madhani H.D."/>
            <person name="Rine J."/>
        </authorList>
    </citation>
    <scope>FUNCTION</scope>
    <scope>IDENTIFICATION IN THE SWR1 COMPLEX</scope>
    <scope>IDENTIFICATION BY MASS SPECTROMETRY</scope>
</reference>
<reference key="12">
    <citation type="journal article" date="2004" name="Science">
        <title>ATP-driven exchange of histone H2AZ variant catalyzed by SWR1 chromatin remodeling complex.</title>
        <authorList>
            <person name="Mizuguchi G."/>
            <person name="Shen X."/>
            <person name="Landry J."/>
            <person name="Wu W.-H."/>
            <person name="Sen S."/>
            <person name="Wu C."/>
        </authorList>
    </citation>
    <scope>IDENTIFICATION IN THE SWR1 COMPLEX</scope>
    <scope>FUNCTION OF THE SWR1 COMPLEX</scope>
    <scope>IDENTIFICATION BY MASS SPECTROMETRY</scope>
</reference>
<reference key="13">
    <citation type="journal article" date="2012" name="Proc. Natl. Acad. Sci. U.S.A.">
        <title>N-terminal acetylome analyses and functional insights of the N-terminal acetyltransferase NatB.</title>
        <authorList>
            <person name="Van Damme P."/>
            <person name="Lasa M."/>
            <person name="Polevoda B."/>
            <person name="Gazquez C."/>
            <person name="Elosegui-Artola A."/>
            <person name="Kim D.S."/>
            <person name="De Juan-Pardo E."/>
            <person name="Demeyer K."/>
            <person name="Hole K."/>
            <person name="Larrea E."/>
            <person name="Timmerman E."/>
            <person name="Prieto J."/>
            <person name="Arnesen T."/>
            <person name="Sherman F."/>
            <person name="Gevaert K."/>
            <person name="Aldabe R."/>
        </authorList>
    </citation>
    <scope>ACETYLATION [LARGE SCALE ANALYSIS] AT SER-2</scope>
    <scope>CLEAVAGE OF INITIATOR METHIONINE [LARGE SCALE ANALYSIS]</scope>
    <scope>IDENTIFICATION BY MASS SPECTROMETRY [LARGE SCALE ANALYSIS]</scope>
</reference>
<accession>P53201</accession>
<accession>D6VUD9</accession>
<feature type="initiator methionine" description="Removed" evidence="12">
    <location>
        <position position="1"/>
    </location>
</feature>
<feature type="chain" id="PRO_0000072345" description="SWR1-complex protein 4">
    <location>
        <begin position="2"/>
        <end position="476"/>
    </location>
</feature>
<feature type="domain" description="SANT">
    <location>
        <begin position="156"/>
        <end position="209"/>
    </location>
</feature>
<feature type="region of interest" description="Disordered" evidence="1">
    <location>
        <begin position="1"/>
        <end position="40"/>
    </location>
</feature>
<feature type="region of interest" description="Disordered" evidence="1">
    <location>
        <begin position="136"/>
        <end position="157"/>
    </location>
</feature>
<feature type="compositionally biased region" description="Polar residues" evidence="1">
    <location>
        <begin position="17"/>
        <end position="32"/>
    </location>
</feature>
<feature type="compositionally biased region" description="Basic and acidic residues" evidence="1">
    <location>
        <begin position="142"/>
        <end position="157"/>
    </location>
</feature>
<feature type="modified residue" description="N-acetylserine" evidence="12">
    <location>
        <position position="2"/>
    </location>
</feature>
<feature type="helix" evidence="13">
    <location>
        <begin position="43"/>
        <end position="49"/>
    </location>
</feature>
<feature type="strand" evidence="14">
    <location>
        <begin position="50"/>
        <end position="52"/>
    </location>
</feature>
<feature type="strand" evidence="13">
    <location>
        <begin position="57"/>
        <end position="60"/>
    </location>
</feature>
<feature type="strand" evidence="14">
    <location>
        <begin position="69"/>
        <end position="71"/>
    </location>
</feature>
<feature type="strand" evidence="13">
    <location>
        <begin position="78"/>
        <end position="88"/>
    </location>
</feature>
<feature type="strand" evidence="13">
    <location>
        <begin position="90"/>
        <end position="96"/>
    </location>
</feature>
<feature type="helix" evidence="14">
    <location>
        <begin position="99"/>
        <end position="102"/>
    </location>
</feature>
<feature type="helix" evidence="13">
    <location>
        <begin position="110"/>
        <end position="114"/>
    </location>
</feature>
<feature type="helix" evidence="13">
    <location>
        <begin position="125"/>
        <end position="131"/>
    </location>
</feature>
<feature type="helix" evidence="13">
    <location>
        <begin position="166"/>
        <end position="178"/>
    </location>
</feature>
<feature type="turn" evidence="13">
    <location>
        <begin position="179"/>
        <end position="181"/>
    </location>
</feature>
<feature type="helix" evidence="13">
    <location>
        <begin position="183"/>
        <end position="189"/>
    </location>
</feature>
<feature type="strand" evidence="14">
    <location>
        <begin position="192"/>
        <end position="194"/>
    </location>
</feature>
<feature type="helix" evidence="13">
    <location>
        <begin position="199"/>
        <end position="215"/>
    </location>
</feature>
<feature type="helix" evidence="13">
    <location>
        <begin position="221"/>
        <end position="224"/>
    </location>
</feature>
<feature type="helix" evidence="13">
    <location>
        <begin position="230"/>
        <end position="244"/>
    </location>
</feature>
<feature type="helix" evidence="13">
    <location>
        <begin position="248"/>
        <end position="265"/>
    </location>
</feature>
<feature type="helix" evidence="13">
    <location>
        <begin position="268"/>
        <end position="282"/>
    </location>
</feature>
<feature type="helix" evidence="13">
    <location>
        <begin position="291"/>
        <end position="295"/>
    </location>
</feature>
<feature type="helix" evidence="13">
    <location>
        <begin position="297"/>
        <end position="308"/>
    </location>
</feature>
<feature type="helix" evidence="13">
    <location>
        <begin position="325"/>
        <end position="328"/>
    </location>
</feature>
<feature type="helix" evidence="14">
    <location>
        <begin position="331"/>
        <end position="333"/>
    </location>
</feature>
<name>SWC4_YEAST</name>
<gene>
    <name type="primary">SWC4</name>
    <name type="synonym">EAF2</name>
    <name type="synonym">GOD1</name>
    <name type="ordered locus">YGR002C</name>
</gene>
<dbReference type="EMBL" id="Z72787">
    <property type="protein sequence ID" value="CAA96985.1"/>
    <property type="molecule type" value="Genomic_DNA"/>
</dbReference>
<dbReference type="EMBL" id="AY692656">
    <property type="protein sequence ID" value="AAT92675.1"/>
    <property type="molecule type" value="Genomic_DNA"/>
</dbReference>
<dbReference type="EMBL" id="BK006941">
    <property type="protein sequence ID" value="DAA08100.1"/>
    <property type="molecule type" value="Genomic_DNA"/>
</dbReference>
<dbReference type="PIR" id="S64291">
    <property type="entry name" value="S64291"/>
</dbReference>
<dbReference type="RefSeq" id="NP_011516.1">
    <property type="nucleotide sequence ID" value="NM_001181131.1"/>
</dbReference>
<dbReference type="PDB" id="7VVY">
    <property type="method" value="EM"/>
    <property type="resolution" value="3.10 A"/>
    <property type="chains" value="K=1-476"/>
</dbReference>
<dbReference type="PDB" id="7VVZ">
    <property type="method" value="EM"/>
    <property type="resolution" value="8.80 A"/>
    <property type="chains" value="K=1-476"/>
</dbReference>
<dbReference type="PDB" id="7YFN">
    <property type="method" value="EM"/>
    <property type="resolution" value="3.80 A"/>
    <property type="chains" value="E=1-476"/>
</dbReference>
<dbReference type="PDB" id="7YFP">
    <property type="method" value="EM"/>
    <property type="resolution" value="4.00 A"/>
    <property type="chains" value="E=1-476"/>
</dbReference>
<dbReference type="PDB" id="8ESC">
    <property type="method" value="EM"/>
    <property type="resolution" value="3.10 A"/>
    <property type="chains" value="S=1-476"/>
</dbReference>
<dbReference type="PDBsum" id="7VVY"/>
<dbReference type="PDBsum" id="7VVZ"/>
<dbReference type="PDBsum" id="7YFN"/>
<dbReference type="PDBsum" id="7YFP"/>
<dbReference type="PDBsum" id="8ESC"/>
<dbReference type="EMDB" id="EMD-28575"/>
<dbReference type="EMDB" id="EMD-32149"/>
<dbReference type="EMDB" id="EMD-32150"/>
<dbReference type="EMDB" id="EMD-33794"/>
<dbReference type="EMDB" id="EMD-33796"/>
<dbReference type="SMR" id="P53201"/>
<dbReference type="BioGRID" id="33246">
    <property type="interactions" value="744"/>
</dbReference>
<dbReference type="ComplexPortal" id="CPX-2122">
    <property type="entry name" value="Swr1 chromatin remodelling complex"/>
</dbReference>
<dbReference type="ComplexPortal" id="CPX-3155">
    <property type="entry name" value="NuA4 histone acetyltransferase complex"/>
</dbReference>
<dbReference type="DIP" id="DIP-6510N"/>
<dbReference type="FunCoup" id="P53201">
    <property type="interactions" value="1137"/>
</dbReference>
<dbReference type="IntAct" id="P53201">
    <property type="interactions" value="36"/>
</dbReference>
<dbReference type="MINT" id="P53201"/>
<dbReference type="STRING" id="4932.YGR002C"/>
<dbReference type="iPTMnet" id="P53201"/>
<dbReference type="PaxDb" id="4932-YGR002C"/>
<dbReference type="PeptideAtlas" id="P53201"/>
<dbReference type="EnsemblFungi" id="YGR002C_mRNA">
    <property type="protein sequence ID" value="YGR002C"/>
    <property type="gene ID" value="YGR002C"/>
</dbReference>
<dbReference type="GeneID" id="852885"/>
<dbReference type="KEGG" id="sce:YGR002C"/>
<dbReference type="AGR" id="SGD:S000003234"/>
<dbReference type="SGD" id="S000003234">
    <property type="gene designation" value="SWC4"/>
</dbReference>
<dbReference type="VEuPathDB" id="FungiDB:YGR002C"/>
<dbReference type="eggNOG" id="KOG2656">
    <property type="taxonomic scope" value="Eukaryota"/>
</dbReference>
<dbReference type="GeneTree" id="ENSGT00390000016466"/>
<dbReference type="HOGENOM" id="CLU_018539_4_0_1"/>
<dbReference type="InParanoid" id="P53201"/>
<dbReference type="OMA" id="GNTTMYQ"/>
<dbReference type="OrthoDB" id="19740at2759"/>
<dbReference type="BioCyc" id="YEAST:G3O-30733-MONOMER"/>
<dbReference type="BioGRID-ORCS" id="852885">
    <property type="hits" value="3 hits in 10 CRISPR screens"/>
</dbReference>
<dbReference type="PRO" id="PR:P53201"/>
<dbReference type="Proteomes" id="UP000002311">
    <property type="component" value="Chromosome VII"/>
</dbReference>
<dbReference type="RNAct" id="P53201">
    <property type="molecule type" value="protein"/>
</dbReference>
<dbReference type="GO" id="GO:0000785">
    <property type="term" value="C:chromatin"/>
    <property type="evidence" value="ECO:0000314"/>
    <property type="project" value="ComplexPortal"/>
</dbReference>
<dbReference type="GO" id="GO:0035267">
    <property type="term" value="C:NuA4 histone acetyltransferase complex"/>
    <property type="evidence" value="ECO:0000314"/>
    <property type="project" value="SGD"/>
</dbReference>
<dbReference type="GO" id="GO:0005634">
    <property type="term" value="C:nucleus"/>
    <property type="evidence" value="ECO:0007005"/>
    <property type="project" value="SGD"/>
</dbReference>
<dbReference type="GO" id="GO:0000812">
    <property type="term" value="C:Swr1 complex"/>
    <property type="evidence" value="ECO:0000314"/>
    <property type="project" value="SGD"/>
</dbReference>
<dbReference type="GO" id="GO:0003714">
    <property type="term" value="F:transcription corepressor activity"/>
    <property type="evidence" value="ECO:0000318"/>
    <property type="project" value="GO_Central"/>
</dbReference>
<dbReference type="GO" id="GO:0006338">
    <property type="term" value="P:chromatin remodeling"/>
    <property type="evidence" value="ECO:0000314"/>
    <property type="project" value="SGD"/>
</dbReference>
<dbReference type="GO" id="GO:0051276">
    <property type="term" value="P:chromosome organization"/>
    <property type="evidence" value="ECO:0000315"/>
    <property type="project" value="SGD"/>
</dbReference>
<dbReference type="GO" id="GO:0006281">
    <property type="term" value="P:DNA repair"/>
    <property type="evidence" value="ECO:0000314"/>
    <property type="project" value="SGD"/>
</dbReference>
<dbReference type="GO" id="GO:0006351">
    <property type="term" value="P:DNA-templated transcription"/>
    <property type="evidence" value="ECO:0000303"/>
    <property type="project" value="ComplexPortal"/>
</dbReference>
<dbReference type="GO" id="GO:0000122">
    <property type="term" value="P:negative regulation of transcription by RNA polymerase II"/>
    <property type="evidence" value="ECO:0000318"/>
    <property type="project" value="GO_Central"/>
</dbReference>
<dbReference type="GO" id="GO:0006355">
    <property type="term" value="P:regulation of DNA-templated transcription"/>
    <property type="evidence" value="ECO:0000303"/>
    <property type="project" value="ComplexPortal"/>
</dbReference>
<dbReference type="CDD" id="cd11658">
    <property type="entry name" value="SANT_DMAP1_like"/>
    <property type="match status" value="1"/>
</dbReference>
<dbReference type="FunFam" id="1.10.10.60:FF:000536">
    <property type="entry name" value="SWR1-complex protein 4"/>
    <property type="match status" value="1"/>
</dbReference>
<dbReference type="Gene3D" id="1.10.10.60">
    <property type="entry name" value="Homeodomain-like"/>
    <property type="match status" value="1"/>
</dbReference>
<dbReference type="InterPro" id="IPR032563">
    <property type="entry name" value="DAMP1_SANT-like"/>
</dbReference>
<dbReference type="InterPro" id="IPR009057">
    <property type="entry name" value="Homeodomain-like_sf"/>
</dbReference>
<dbReference type="InterPro" id="IPR001005">
    <property type="entry name" value="SANT/Myb"/>
</dbReference>
<dbReference type="InterPro" id="IPR027109">
    <property type="entry name" value="Swc4/Dmap1"/>
</dbReference>
<dbReference type="PANTHER" id="PTHR12855:SF10">
    <property type="entry name" value="DNA METHYLTRANSFERASE 1-ASSOCIATED PROTEIN 1"/>
    <property type="match status" value="1"/>
</dbReference>
<dbReference type="PANTHER" id="PTHR12855">
    <property type="entry name" value="DNA METHYLTRANSFERASE 1-ASSOCIATED PROTEIN 1 FAMILY MEMBER"/>
    <property type="match status" value="1"/>
</dbReference>
<dbReference type="Pfam" id="PF16282">
    <property type="entry name" value="SANT_DAMP1_like"/>
    <property type="match status" value="1"/>
</dbReference>
<dbReference type="SMART" id="SM00717">
    <property type="entry name" value="SANT"/>
    <property type="match status" value="1"/>
</dbReference>
<dbReference type="SUPFAM" id="SSF46689">
    <property type="entry name" value="Homeodomain-like"/>
    <property type="match status" value="1"/>
</dbReference>